<keyword id="KW-0408">Iron</keyword>
<keyword id="KW-0411">Iron-sulfur</keyword>
<keyword id="KW-0479">Metal-binding</keyword>
<keyword id="KW-1185">Reference proteome</keyword>
<dbReference type="EMBL" id="BA000003">
    <property type="protein sequence ID" value="BAB12928.1"/>
    <property type="molecule type" value="Genomic_DNA"/>
</dbReference>
<dbReference type="RefSeq" id="NP_240042.1">
    <property type="nucleotide sequence ID" value="NC_002528.1"/>
</dbReference>
<dbReference type="RefSeq" id="WP_010896006.1">
    <property type="nucleotide sequence ID" value="NC_002528.1"/>
</dbReference>
<dbReference type="SMR" id="P57307"/>
<dbReference type="STRING" id="563178.BUAP5A_208"/>
<dbReference type="EnsemblBacteria" id="BAB12928">
    <property type="protein sequence ID" value="BAB12928"/>
    <property type="gene ID" value="BAB12928"/>
</dbReference>
<dbReference type="KEGG" id="buc:BU211"/>
<dbReference type="PATRIC" id="fig|107806.10.peg.223"/>
<dbReference type="eggNOG" id="COG0316">
    <property type="taxonomic scope" value="Bacteria"/>
</dbReference>
<dbReference type="HOGENOM" id="CLU_069054_5_3_6"/>
<dbReference type="Proteomes" id="UP000001806">
    <property type="component" value="Chromosome"/>
</dbReference>
<dbReference type="GO" id="GO:0005829">
    <property type="term" value="C:cytosol"/>
    <property type="evidence" value="ECO:0007669"/>
    <property type="project" value="TreeGrafter"/>
</dbReference>
<dbReference type="GO" id="GO:0051537">
    <property type="term" value="F:2 iron, 2 sulfur cluster binding"/>
    <property type="evidence" value="ECO:0007669"/>
    <property type="project" value="TreeGrafter"/>
</dbReference>
<dbReference type="GO" id="GO:0051539">
    <property type="term" value="F:4 iron, 4 sulfur cluster binding"/>
    <property type="evidence" value="ECO:0007669"/>
    <property type="project" value="TreeGrafter"/>
</dbReference>
<dbReference type="GO" id="GO:0005506">
    <property type="term" value="F:iron ion binding"/>
    <property type="evidence" value="ECO:0007669"/>
    <property type="project" value="UniProtKB-UniRule"/>
</dbReference>
<dbReference type="GO" id="GO:0016226">
    <property type="term" value="P:iron-sulfur cluster assembly"/>
    <property type="evidence" value="ECO:0007669"/>
    <property type="project" value="UniProtKB-UniRule"/>
</dbReference>
<dbReference type="FunFam" id="2.60.300.12:FF:000002">
    <property type="entry name" value="Iron-sulfur cluster insertion protein ErpA"/>
    <property type="match status" value="1"/>
</dbReference>
<dbReference type="Gene3D" id="2.60.300.12">
    <property type="entry name" value="HesB-like domain"/>
    <property type="match status" value="1"/>
</dbReference>
<dbReference type="HAMAP" id="MF_01380">
    <property type="entry name" value="Fe_S_insert_ErpA"/>
    <property type="match status" value="1"/>
</dbReference>
<dbReference type="InterPro" id="IPR000361">
    <property type="entry name" value="FeS_biogenesis"/>
</dbReference>
<dbReference type="InterPro" id="IPR016092">
    <property type="entry name" value="FeS_cluster_insertion"/>
</dbReference>
<dbReference type="InterPro" id="IPR017870">
    <property type="entry name" value="FeS_cluster_insertion_CS"/>
</dbReference>
<dbReference type="InterPro" id="IPR023063">
    <property type="entry name" value="FeS_cluster_insertion_RrpA"/>
</dbReference>
<dbReference type="InterPro" id="IPR035903">
    <property type="entry name" value="HesB-like_dom_sf"/>
</dbReference>
<dbReference type="NCBIfam" id="TIGR00049">
    <property type="entry name" value="iron-sulfur cluster assembly accessory protein"/>
    <property type="match status" value="1"/>
</dbReference>
<dbReference type="NCBIfam" id="NF010147">
    <property type="entry name" value="PRK13623.1"/>
    <property type="match status" value="1"/>
</dbReference>
<dbReference type="PANTHER" id="PTHR43011">
    <property type="entry name" value="IRON-SULFUR CLUSTER ASSEMBLY 2 HOMOLOG, MITOCHONDRIAL"/>
    <property type="match status" value="1"/>
</dbReference>
<dbReference type="PANTHER" id="PTHR43011:SF1">
    <property type="entry name" value="IRON-SULFUR CLUSTER ASSEMBLY 2 HOMOLOG, MITOCHONDRIAL"/>
    <property type="match status" value="1"/>
</dbReference>
<dbReference type="Pfam" id="PF01521">
    <property type="entry name" value="Fe-S_biosyn"/>
    <property type="match status" value="1"/>
</dbReference>
<dbReference type="SUPFAM" id="SSF89360">
    <property type="entry name" value="HesB-like domain"/>
    <property type="match status" value="1"/>
</dbReference>
<dbReference type="PROSITE" id="PS01152">
    <property type="entry name" value="HESB"/>
    <property type="match status" value="1"/>
</dbReference>
<organism>
    <name type="scientific">Buchnera aphidicola subsp. Acyrthosiphon pisum (strain APS)</name>
    <name type="common">Acyrthosiphon pisum symbiotic bacterium</name>
    <dbReference type="NCBI Taxonomy" id="107806"/>
    <lineage>
        <taxon>Bacteria</taxon>
        <taxon>Pseudomonadati</taxon>
        <taxon>Pseudomonadota</taxon>
        <taxon>Gammaproteobacteria</taxon>
        <taxon>Enterobacterales</taxon>
        <taxon>Erwiniaceae</taxon>
        <taxon>Buchnera</taxon>
    </lineage>
</organism>
<comment type="function">
    <text evidence="1">Required for insertion of 4Fe-4S clusters for at least IspG.</text>
</comment>
<comment type="cofactor">
    <cofactor evidence="1">
        <name>iron-sulfur cluster</name>
        <dbReference type="ChEBI" id="CHEBI:30408"/>
    </cofactor>
    <text evidence="1">Binds 1 iron-sulfur cluster per subunit.</text>
</comment>
<comment type="subunit">
    <text evidence="1">Homodimer.</text>
</comment>
<comment type="similarity">
    <text evidence="1">Belongs to the HesB/IscA family.</text>
</comment>
<reference key="1">
    <citation type="journal article" date="2000" name="Nature">
        <title>Genome sequence of the endocellular bacterial symbiont of aphids Buchnera sp. APS.</title>
        <authorList>
            <person name="Shigenobu S."/>
            <person name="Watanabe H."/>
            <person name="Hattori M."/>
            <person name="Sakaki Y."/>
            <person name="Ishikawa H."/>
        </authorList>
    </citation>
    <scope>NUCLEOTIDE SEQUENCE [LARGE SCALE GENOMIC DNA]</scope>
    <source>
        <strain>APS</strain>
    </source>
</reference>
<feature type="chain" id="PRO_0000077015" description="Iron-sulfur cluster insertion protein ErpA">
    <location>
        <begin position="1"/>
        <end position="114"/>
    </location>
</feature>
<feature type="binding site" evidence="1">
    <location>
        <position position="42"/>
    </location>
    <ligand>
        <name>iron-sulfur cluster</name>
        <dbReference type="ChEBI" id="CHEBI:30408"/>
    </ligand>
</feature>
<feature type="binding site" evidence="1">
    <location>
        <position position="106"/>
    </location>
    <ligand>
        <name>iron-sulfur cluster</name>
        <dbReference type="ChEBI" id="CHEBI:30408"/>
    </ligand>
</feature>
<feature type="binding site" evidence="1">
    <location>
        <position position="108"/>
    </location>
    <ligand>
        <name>iron-sulfur cluster</name>
        <dbReference type="ChEBI" id="CHEBI:30408"/>
    </ligand>
</feature>
<sequence length="114" mass="12908">MENAFKSHLQFTEKAIKKIKNLIEIEKNHDLKLRIYINGGGCSGFQYQFIFDTSINEDDIIITQSEVSLIIDPISLQYLYGGQIDYLENLEGSKFIVYNPNAKNTCGCGSSFSI</sequence>
<proteinExistence type="inferred from homology"/>
<accession>P57307</accession>
<evidence type="ECO:0000255" key="1">
    <source>
        <dbReference type="HAMAP-Rule" id="MF_01380"/>
    </source>
</evidence>
<gene>
    <name evidence="1" type="primary">erpA</name>
    <name type="ordered locus">BU211</name>
</gene>
<name>ERPA_BUCAI</name>
<protein>
    <recommendedName>
        <fullName evidence="1">Iron-sulfur cluster insertion protein ErpA</fullName>
    </recommendedName>
</protein>